<protein>
    <recommendedName>
        <fullName>Methionine--tRNA ligase</fullName>
        <ecNumber>6.1.1.10</ecNumber>
    </recommendedName>
    <alternativeName>
        <fullName>Methionyl-tRNA synthetase</fullName>
        <shortName>MetRS</shortName>
    </alternativeName>
</protein>
<proteinExistence type="inferred from homology"/>
<evidence type="ECO:0000250" key="1"/>
<evidence type="ECO:0000305" key="2"/>
<dbReference type="EC" id="6.1.1.10"/>
<dbReference type="EMBL" id="AE013218">
    <property type="protein sequence ID" value="AAM67672.1"/>
    <property type="molecule type" value="Genomic_DNA"/>
</dbReference>
<dbReference type="EMBL" id="AF067228">
    <property type="protein sequence ID" value="AAC97364.1"/>
    <property type="molecule type" value="Genomic_DNA"/>
</dbReference>
<dbReference type="RefSeq" id="WP_011053638.1">
    <property type="nucleotide sequence ID" value="NC_004061.1"/>
</dbReference>
<dbReference type="SMR" id="Q9ZHD7"/>
<dbReference type="STRING" id="198804.BUsg_102"/>
<dbReference type="GeneID" id="93003571"/>
<dbReference type="KEGG" id="bas:BUsg_102"/>
<dbReference type="eggNOG" id="COG0143">
    <property type="taxonomic scope" value="Bacteria"/>
</dbReference>
<dbReference type="HOGENOM" id="CLU_009710_7_0_6"/>
<dbReference type="Proteomes" id="UP000000416">
    <property type="component" value="Chromosome"/>
</dbReference>
<dbReference type="GO" id="GO:0005829">
    <property type="term" value="C:cytosol"/>
    <property type="evidence" value="ECO:0007669"/>
    <property type="project" value="TreeGrafter"/>
</dbReference>
<dbReference type="GO" id="GO:0005524">
    <property type="term" value="F:ATP binding"/>
    <property type="evidence" value="ECO:0007669"/>
    <property type="project" value="UniProtKB-UniRule"/>
</dbReference>
<dbReference type="GO" id="GO:0046872">
    <property type="term" value="F:metal ion binding"/>
    <property type="evidence" value="ECO:0007669"/>
    <property type="project" value="UniProtKB-KW"/>
</dbReference>
<dbReference type="GO" id="GO:0004825">
    <property type="term" value="F:methionine-tRNA ligase activity"/>
    <property type="evidence" value="ECO:0007669"/>
    <property type="project" value="UniProtKB-UniRule"/>
</dbReference>
<dbReference type="GO" id="GO:0006431">
    <property type="term" value="P:methionyl-tRNA aminoacylation"/>
    <property type="evidence" value="ECO:0007669"/>
    <property type="project" value="UniProtKB-UniRule"/>
</dbReference>
<dbReference type="CDD" id="cd07957">
    <property type="entry name" value="Anticodon_Ia_Met"/>
    <property type="match status" value="1"/>
</dbReference>
<dbReference type="FunFam" id="2.20.28.20:FF:000001">
    <property type="entry name" value="Methionine--tRNA ligase"/>
    <property type="match status" value="1"/>
</dbReference>
<dbReference type="Gene3D" id="3.40.50.620">
    <property type="entry name" value="HUPs"/>
    <property type="match status" value="1"/>
</dbReference>
<dbReference type="Gene3D" id="1.10.730.10">
    <property type="entry name" value="Isoleucyl-tRNA Synthetase, Domain 1"/>
    <property type="match status" value="1"/>
</dbReference>
<dbReference type="Gene3D" id="2.20.28.20">
    <property type="entry name" value="Methionyl-tRNA synthetase, Zn-domain"/>
    <property type="match status" value="1"/>
</dbReference>
<dbReference type="HAMAP" id="MF_00098">
    <property type="entry name" value="Met_tRNA_synth_type1"/>
    <property type="match status" value="1"/>
</dbReference>
<dbReference type="InterPro" id="IPR001412">
    <property type="entry name" value="aa-tRNA-synth_I_CS"/>
</dbReference>
<dbReference type="InterPro" id="IPR041872">
    <property type="entry name" value="Anticodon_Met"/>
</dbReference>
<dbReference type="InterPro" id="IPR023458">
    <property type="entry name" value="Met-tRNA_ligase_1"/>
</dbReference>
<dbReference type="InterPro" id="IPR014758">
    <property type="entry name" value="Met-tRNA_synth"/>
</dbReference>
<dbReference type="InterPro" id="IPR015413">
    <property type="entry name" value="Methionyl/Leucyl_tRNA_Synth"/>
</dbReference>
<dbReference type="InterPro" id="IPR033911">
    <property type="entry name" value="MetRS_core"/>
</dbReference>
<dbReference type="InterPro" id="IPR029038">
    <property type="entry name" value="MetRS_Zn"/>
</dbReference>
<dbReference type="InterPro" id="IPR014729">
    <property type="entry name" value="Rossmann-like_a/b/a_fold"/>
</dbReference>
<dbReference type="InterPro" id="IPR009080">
    <property type="entry name" value="tRNAsynth_Ia_anticodon-bd"/>
</dbReference>
<dbReference type="NCBIfam" id="TIGR00398">
    <property type="entry name" value="metG"/>
    <property type="match status" value="1"/>
</dbReference>
<dbReference type="NCBIfam" id="NF001100">
    <property type="entry name" value="PRK00133.1"/>
    <property type="match status" value="1"/>
</dbReference>
<dbReference type="PANTHER" id="PTHR45765">
    <property type="entry name" value="METHIONINE--TRNA LIGASE"/>
    <property type="match status" value="1"/>
</dbReference>
<dbReference type="PANTHER" id="PTHR45765:SF1">
    <property type="entry name" value="METHIONINE--TRNA LIGASE, CYTOPLASMIC"/>
    <property type="match status" value="1"/>
</dbReference>
<dbReference type="Pfam" id="PF19303">
    <property type="entry name" value="Anticodon_3"/>
    <property type="match status" value="1"/>
</dbReference>
<dbReference type="Pfam" id="PF09334">
    <property type="entry name" value="tRNA-synt_1g"/>
    <property type="match status" value="1"/>
</dbReference>
<dbReference type="PRINTS" id="PR01041">
    <property type="entry name" value="TRNASYNTHMET"/>
</dbReference>
<dbReference type="SUPFAM" id="SSF47323">
    <property type="entry name" value="Anticodon-binding domain of a subclass of class I aminoacyl-tRNA synthetases"/>
    <property type="match status" value="1"/>
</dbReference>
<dbReference type="SUPFAM" id="SSF57770">
    <property type="entry name" value="Methionyl-tRNA synthetase (MetRS), Zn-domain"/>
    <property type="match status" value="1"/>
</dbReference>
<dbReference type="SUPFAM" id="SSF52374">
    <property type="entry name" value="Nucleotidylyl transferase"/>
    <property type="match status" value="1"/>
</dbReference>
<dbReference type="PROSITE" id="PS00178">
    <property type="entry name" value="AA_TRNA_LIGASE_I"/>
    <property type="match status" value="1"/>
</dbReference>
<sequence>MSNKFKKILVTCALPYANGPIHIGHMLEHIQADIWVRYQRMRNNEVWFISSDDAHGTAIMLKSEKLGITPIKLIKKIKEEHIIDFSNFNISHDNYHSTHCVENLFLLRKIFLSLSEQKLINEKKIFQFYDNTKKMFLPDRFIKGTCPFCSSKNQNGDNCEICGSIYEPTDLVNPISVISNSVPILKNTTHLYFNLPLFTNMLNKWIHSGILEKSVAKKTEEWLKSGLKEWGISRDAPYFGFKIPKFDKKYFYVWLDAPVGYISAFKNFCTKNKKVDFNEFWKKESKCELYHFIGKDIIYFHTLFWPAILEASSYRKPNGIFVHGHLTINGLKLSKSRGFLIKASDWIKCFDSDSLRYYYASKLSNNINDIEINLEDFIQKINSDIVNKLVNLASRNASFIHKYFDGYLADSLGDCNLYQDFIDISKKIANFFENRQFSSVIRECMKLLDLANQYINQREPWKIKQDNFNKLHTICTVGINLFRLVVIFLKPIIPDLAKKTEYFLISDLTWKGIDKPLLSHKIKKFKKLYNRINHDKILQLSLLCK</sequence>
<accession>Q9ZHD7</accession>
<gene>
    <name type="primary">metG</name>
    <name type="ordered locus">BUsg_102</name>
</gene>
<organism>
    <name type="scientific">Buchnera aphidicola subsp. Schizaphis graminum (strain Sg)</name>
    <dbReference type="NCBI Taxonomy" id="198804"/>
    <lineage>
        <taxon>Bacteria</taxon>
        <taxon>Pseudomonadati</taxon>
        <taxon>Pseudomonadota</taxon>
        <taxon>Gammaproteobacteria</taxon>
        <taxon>Enterobacterales</taxon>
        <taxon>Erwiniaceae</taxon>
        <taxon>Buchnera</taxon>
    </lineage>
</organism>
<keyword id="KW-0030">Aminoacyl-tRNA synthetase</keyword>
<keyword id="KW-0067">ATP-binding</keyword>
<keyword id="KW-0963">Cytoplasm</keyword>
<keyword id="KW-0436">Ligase</keyword>
<keyword id="KW-0479">Metal-binding</keyword>
<keyword id="KW-0547">Nucleotide-binding</keyword>
<keyword id="KW-0648">Protein biosynthesis</keyword>
<keyword id="KW-0862">Zinc</keyword>
<comment type="function">
    <text evidence="1">Is required not only for elongation of protein synthesis but also for the initiation of all mRNA translation through initiator tRNA(fMet) aminoacylation.</text>
</comment>
<comment type="catalytic activity">
    <reaction>
        <text>tRNA(Met) + L-methionine + ATP = L-methionyl-tRNA(Met) + AMP + diphosphate</text>
        <dbReference type="Rhea" id="RHEA:13481"/>
        <dbReference type="Rhea" id="RHEA-COMP:9667"/>
        <dbReference type="Rhea" id="RHEA-COMP:9698"/>
        <dbReference type="ChEBI" id="CHEBI:30616"/>
        <dbReference type="ChEBI" id="CHEBI:33019"/>
        <dbReference type="ChEBI" id="CHEBI:57844"/>
        <dbReference type="ChEBI" id="CHEBI:78442"/>
        <dbReference type="ChEBI" id="CHEBI:78530"/>
        <dbReference type="ChEBI" id="CHEBI:456215"/>
        <dbReference type="EC" id="6.1.1.10"/>
    </reaction>
</comment>
<comment type="cofactor">
    <cofactor evidence="1">
        <name>Zn(2+)</name>
        <dbReference type="ChEBI" id="CHEBI:29105"/>
    </cofactor>
    <text evidence="1">Binds 1 zinc ion per subunit.</text>
</comment>
<comment type="subunit">
    <text evidence="1">Monomer.</text>
</comment>
<comment type="subcellular location">
    <subcellularLocation>
        <location evidence="1">Cytoplasm</location>
    </subcellularLocation>
</comment>
<comment type="similarity">
    <text evidence="2">Belongs to the class-I aminoacyl-tRNA synthetase family. MetG type 1 subfamily.</text>
</comment>
<reference key="1">
    <citation type="journal article" date="2002" name="Science">
        <title>50 million years of genomic stasis in endosymbiotic bacteria.</title>
        <authorList>
            <person name="Tamas I."/>
            <person name="Klasson L."/>
            <person name="Canbaeck B."/>
            <person name="Naeslund A.K."/>
            <person name="Eriksson A.-S."/>
            <person name="Wernegreen J.J."/>
            <person name="Sandstroem J.P."/>
            <person name="Moran N.A."/>
            <person name="Andersson S.G.E."/>
        </authorList>
    </citation>
    <scope>NUCLEOTIDE SEQUENCE [LARGE SCALE GENOMIC DNA]</scope>
    <source>
        <strain>Sg</strain>
    </source>
</reference>
<reference key="2">
    <citation type="journal article" date="1998" name="Curr. Microbiol.">
        <title>Buchnera aphidicola (Aphid endosymbiont) contains genes encoding enzymes of histidine biosynthesis.</title>
        <authorList>
            <person name="Clark M.A."/>
            <person name="Baumann L."/>
            <person name="Baumann P."/>
        </authorList>
    </citation>
    <scope>NUCLEOTIDE SEQUENCE [GENOMIC DNA] OF 1-234</scope>
</reference>
<name>SYM_BUCAP</name>
<feature type="chain" id="PRO_0000139112" description="Methionine--tRNA ligase">
    <location>
        <begin position="1"/>
        <end position="545"/>
    </location>
</feature>
<feature type="short sequence motif" description="'HIGH' region">
    <location>
        <begin position="15"/>
        <end position="25"/>
    </location>
</feature>
<feature type="short sequence motif" description="'KMSKS' region">
    <location>
        <begin position="332"/>
        <end position="336"/>
    </location>
</feature>
<feature type="binding site" evidence="1">
    <location>
        <position position="146"/>
    </location>
    <ligand>
        <name>Zn(2+)</name>
        <dbReference type="ChEBI" id="CHEBI:29105"/>
    </ligand>
</feature>
<feature type="binding site" evidence="1">
    <location>
        <position position="149"/>
    </location>
    <ligand>
        <name>Zn(2+)</name>
        <dbReference type="ChEBI" id="CHEBI:29105"/>
    </ligand>
</feature>
<feature type="binding site" evidence="1">
    <location>
        <position position="159"/>
    </location>
    <ligand>
        <name>Zn(2+)</name>
        <dbReference type="ChEBI" id="CHEBI:29105"/>
    </ligand>
</feature>
<feature type="binding site" evidence="1">
    <location>
        <position position="162"/>
    </location>
    <ligand>
        <name>Zn(2+)</name>
        <dbReference type="ChEBI" id="CHEBI:29105"/>
    </ligand>
</feature>
<feature type="binding site" evidence="1">
    <location>
        <position position="335"/>
    </location>
    <ligand>
        <name>ATP</name>
        <dbReference type="ChEBI" id="CHEBI:30616"/>
    </ligand>
</feature>